<keyword id="KW-0378">Hydrolase</keyword>
<keyword id="KW-0719">Serine esterase</keyword>
<protein>
    <recommendedName>
        <fullName evidence="1">Esterase FrsA</fullName>
        <ecNumber evidence="1">3.1.1.1</ecNumber>
    </recommendedName>
</protein>
<sequence length="415" mass="46737">MSEASSKNLSETLFQNHKQAKETSSLTQYMPSSLELLDTRREQSSQAWYRNLRRLQWIWQGVDPVEQEEILARIASSKHSRTHDEWLDTVMGYRSGNWTYEWTRVGMLHQKQAAERQGEEAADQMFAAALYYSIAGYPHLRNDNLALQAQVLANNAYQEAAKLTGFVVKRLEFSYQNKKIAGYLHLRNTDSPKPVVLVSAGLDSLQTDMWRLFRDYLAKRDIAMLTIDMPSLGASSHWPLTEDSSCLHQAVLNQLADLPWVDHFRIGLIGFRFGGNAMARLAFLESDKVKACVSLGAPIHDIFTSPNKLAAMPKMYLDVLASRLGKNVVDVRSLSGQLMAWSLKVQGFMSGRRTKTPILALGLEGDPVSPYSDNQLVALFSQGGQAKKVKSKTISQGYEQSLDLAINWLEDELCK</sequence>
<name>FRSA_VIBCM</name>
<comment type="function">
    <text evidence="1">Catalyzes the hydrolysis of esters.</text>
</comment>
<comment type="catalytic activity">
    <reaction evidence="1">
        <text>a carboxylic ester + H2O = an alcohol + a carboxylate + H(+)</text>
        <dbReference type="Rhea" id="RHEA:21164"/>
        <dbReference type="ChEBI" id="CHEBI:15377"/>
        <dbReference type="ChEBI" id="CHEBI:15378"/>
        <dbReference type="ChEBI" id="CHEBI:29067"/>
        <dbReference type="ChEBI" id="CHEBI:30879"/>
        <dbReference type="ChEBI" id="CHEBI:33308"/>
        <dbReference type="EC" id="3.1.1.1"/>
    </reaction>
</comment>
<comment type="similarity">
    <text evidence="1">Belongs to the FrsA family.</text>
</comment>
<organism>
    <name type="scientific">Vibrio cholerae serotype O1 (strain M66-2)</name>
    <dbReference type="NCBI Taxonomy" id="579112"/>
    <lineage>
        <taxon>Bacteria</taxon>
        <taxon>Pseudomonadati</taxon>
        <taxon>Pseudomonadota</taxon>
        <taxon>Gammaproteobacteria</taxon>
        <taxon>Vibrionales</taxon>
        <taxon>Vibrionaceae</taxon>
        <taxon>Vibrio</taxon>
    </lineage>
</organism>
<feature type="chain" id="PRO_1000149725" description="Esterase FrsA">
    <location>
        <begin position="1"/>
        <end position="415"/>
    </location>
</feature>
<reference key="1">
    <citation type="journal article" date="2008" name="PLoS ONE">
        <title>A recalibrated molecular clock and independent origins for the cholera pandemic clones.</title>
        <authorList>
            <person name="Feng L."/>
            <person name="Reeves P.R."/>
            <person name="Lan R."/>
            <person name="Ren Y."/>
            <person name="Gao C."/>
            <person name="Zhou Z."/>
            <person name="Ren Y."/>
            <person name="Cheng J."/>
            <person name="Wang W."/>
            <person name="Wang J."/>
            <person name="Qian W."/>
            <person name="Li D."/>
            <person name="Wang L."/>
        </authorList>
    </citation>
    <scope>NUCLEOTIDE SEQUENCE [LARGE SCALE GENOMIC DNA]</scope>
    <source>
        <strain>M66-2</strain>
    </source>
</reference>
<dbReference type="EC" id="3.1.1.1" evidence="1"/>
<dbReference type="EMBL" id="CP001233">
    <property type="protein sequence ID" value="ACP06500.1"/>
    <property type="molecule type" value="Genomic_DNA"/>
</dbReference>
<dbReference type="RefSeq" id="WP_001287570.1">
    <property type="nucleotide sequence ID" value="NC_012578.1"/>
</dbReference>
<dbReference type="SMR" id="C3LQ48"/>
<dbReference type="ESTHER" id="vibch-y2276">
    <property type="family name" value="Duf_1100-R"/>
</dbReference>
<dbReference type="GeneID" id="69719100"/>
<dbReference type="KEGG" id="vcm:VCM66_2199"/>
<dbReference type="HOGENOM" id="CLU_036819_0_0_6"/>
<dbReference type="Proteomes" id="UP000001217">
    <property type="component" value="Chromosome I"/>
</dbReference>
<dbReference type="GO" id="GO:0106435">
    <property type="term" value="F:carboxylesterase activity"/>
    <property type="evidence" value="ECO:0007669"/>
    <property type="project" value="UniProtKB-EC"/>
</dbReference>
<dbReference type="Gene3D" id="3.40.50.1820">
    <property type="entry name" value="alpha/beta hydrolase"/>
    <property type="match status" value="1"/>
</dbReference>
<dbReference type="HAMAP" id="MF_01063">
    <property type="entry name" value="FrsA"/>
    <property type="match status" value="1"/>
</dbReference>
<dbReference type="InterPro" id="IPR029058">
    <property type="entry name" value="AB_hydrolase_fold"/>
</dbReference>
<dbReference type="InterPro" id="IPR043423">
    <property type="entry name" value="FrsA"/>
</dbReference>
<dbReference type="InterPro" id="IPR010520">
    <property type="entry name" value="FrsA-like"/>
</dbReference>
<dbReference type="InterPro" id="IPR050261">
    <property type="entry name" value="FrsA_esterase"/>
</dbReference>
<dbReference type="NCBIfam" id="NF003460">
    <property type="entry name" value="PRK05077.1"/>
    <property type="match status" value="1"/>
</dbReference>
<dbReference type="PANTHER" id="PTHR22946">
    <property type="entry name" value="DIENELACTONE HYDROLASE DOMAIN-CONTAINING PROTEIN-RELATED"/>
    <property type="match status" value="1"/>
</dbReference>
<dbReference type="PANTHER" id="PTHR22946:SF4">
    <property type="entry name" value="ESTERASE FRSA"/>
    <property type="match status" value="1"/>
</dbReference>
<dbReference type="Pfam" id="PF06500">
    <property type="entry name" value="FrsA-like"/>
    <property type="match status" value="1"/>
</dbReference>
<dbReference type="SUPFAM" id="SSF53474">
    <property type="entry name" value="alpha/beta-Hydrolases"/>
    <property type="match status" value="1"/>
</dbReference>
<proteinExistence type="inferred from homology"/>
<evidence type="ECO:0000255" key="1">
    <source>
        <dbReference type="HAMAP-Rule" id="MF_01063"/>
    </source>
</evidence>
<accession>C3LQ48</accession>
<gene>
    <name evidence="1" type="primary">frsA</name>
    <name type="ordered locus">VCM66_2199</name>
</gene>